<sequence>MKWATWILALGLLVVRTVVAREAPRELCYGHPVHDDRRPVGPATDAQPVNPLAPANATGTDYSRGCEMRLLDPPLDVSSRSSDPVNVTVAWFFDGGHCKVPLVHREYYGCPGDAMPSVETCTGGYSYTRTRIDTLMEYALVNASLVLQPGLYDAGLYIVVLVFGDDAYLGTVSLSVEANLDYPCGMKHGLTITRPGATLPPIAPTAGDHQRWRGCFPSTDEGAWENVTAAEKGLSDDYADYYDVHIFRSESDDEVVHGDAPEAPEGEEVTEEEAELTSSDLDNIEIEVVGSPAAPAEGPATEEGRGAEEDEELTSSDLDNIEIEVVGSPRPPASSPPPPPPRPHPRGRDHDHDHGHHRADDRGPQRHHRLPPEPTFVSPSDIFVTPTGSPALLLGFLGSALASRPLHLTAGETAQHVREAQQKSRHIRSLGGLQLSVETETTNTTTTQTGLSGDIRTSIYICVALAGLVVVGIVIMCLHMAIIRARARNDGYRHVASA</sequence>
<keyword id="KW-0325">Glycoprotein</keyword>
<keyword id="KW-0945">Host-virus interaction</keyword>
<keyword id="KW-1086">Inhibition of host chemokines by virus</keyword>
<keyword id="KW-0472">Membrane</keyword>
<keyword id="KW-0677">Repeat</keyword>
<keyword id="KW-0732">Signal</keyword>
<keyword id="KW-0812">Transmembrane</keyword>
<keyword id="KW-1133">Transmembrane helix</keyword>
<keyword id="KW-0261">Viral envelope protein</keyword>
<keyword id="KW-0899">Viral immunoevasion</keyword>
<keyword id="KW-0946">Virion</keyword>
<reference key="1">
    <citation type="journal article" date="1985" name="J. Virol.">
        <title>Mapping and sequence of the gene for the pseudorabies virus glycoprotein which accumulates in the medium of infected cells.</title>
        <authorList>
            <person name="Rea T.J."/>
            <person name="Timmins J.G."/>
            <person name="Long G.W."/>
            <person name="Post L.E."/>
        </authorList>
    </citation>
    <scope>NUCLEOTIDE SEQUENCE [GENOMIC DNA]</scope>
</reference>
<organismHost>
    <name type="scientific">Sus scrofa</name>
    <name type="common">Pig</name>
    <dbReference type="NCBI Taxonomy" id="9823"/>
</organismHost>
<dbReference type="EMBL" id="M10986">
    <property type="protein sequence ID" value="AAC35206.1"/>
    <property type="molecule type" value="Genomic_DNA"/>
</dbReference>
<dbReference type="PIR" id="A21879">
    <property type="entry name" value="VGBEGX"/>
</dbReference>
<dbReference type="GlyCosmos" id="P07562">
    <property type="glycosylation" value="5 sites, No reported glycans"/>
</dbReference>
<dbReference type="KEGG" id="vg:2952520"/>
<dbReference type="GO" id="GO:0016020">
    <property type="term" value="C:membrane"/>
    <property type="evidence" value="ECO:0007669"/>
    <property type="project" value="UniProtKB-KW"/>
</dbReference>
<dbReference type="GO" id="GO:0019031">
    <property type="term" value="C:viral envelope"/>
    <property type="evidence" value="ECO:0007669"/>
    <property type="project" value="UniProtKB-KW"/>
</dbReference>
<dbReference type="GO" id="GO:0055036">
    <property type="term" value="C:virion membrane"/>
    <property type="evidence" value="ECO:0007669"/>
    <property type="project" value="UniProtKB-SubCell"/>
</dbReference>
<dbReference type="Gene3D" id="2.70.230.10">
    <property type="match status" value="1"/>
</dbReference>
<dbReference type="InterPro" id="IPR002896">
    <property type="entry name" value="Herpes_glycop_dom"/>
</dbReference>
<dbReference type="InterPro" id="IPR036179">
    <property type="entry name" value="Ig-like_dom_sf"/>
</dbReference>
<dbReference type="Pfam" id="PF01537">
    <property type="entry name" value="Herpes_glycop_D"/>
    <property type="match status" value="1"/>
</dbReference>
<dbReference type="SUPFAM" id="SSF48726">
    <property type="entry name" value="Immunoglobulin"/>
    <property type="match status" value="1"/>
</dbReference>
<evidence type="ECO:0000250" key="1"/>
<evidence type="ECO:0000255" key="2"/>
<evidence type="ECO:0000256" key="3">
    <source>
        <dbReference type="SAM" id="MobiDB-lite"/>
    </source>
</evidence>
<evidence type="ECO:0000305" key="4"/>
<feature type="signal peptide" evidence="2">
    <location>
        <begin position="1"/>
        <end position="20"/>
    </location>
</feature>
<feature type="chain" id="PRO_0000115788" description="Envelope glycoprotein G">
    <location>
        <begin position="21"/>
        <end position="498"/>
    </location>
</feature>
<feature type="transmembrane region" description="Helical" evidence="2">
    <location>
        <begin position="463"/>
        <end position="483"/>
    </location>
</feature>
<feature type="repeat" description="1">
    <location>
        <begin position="271"/>
        <end position="292"/>
    </location>
</feature>
<feature type="repeat" description="2">
    <location>
        <begin position="308"/>
        <end position="329"/>
    </location>
</feature>
<feature type="region of interest" description="2 X 22 AA repeats of E-E-[DE]-[AE]-E-L-T-S-S-D-L-D-N-I-E-I-E-V-V-G-S-P">
    <location>
        <begin position="271"/>
        <end position="329"/>
    </location>
</feature>
<feature type="region of interest" description="Disordered" evidence="3">
    <location>
        <begin position="290"/>
        <end position="377"/>
    </location>
</feature>
<feature type="compositionally biased region" description="Low complexity" evidence="3">
    <location>
        <begin position="292"/>
        <end position="301"/>
    </location>
</feature>
<feature type="compositionally biased region" description="Acidic residues" evidence="3">
    <location>
        <begin position="308"/>
        <end position="322"/>
    </location>
</feature>
<feature type="compositionally biased region" description="Pro residues" evidence="3">
    <location>
        <begin position="329"/>
        <end position="342"/>
    </location>
</feature>
<feature type="compositionally biased region" description="Basic and acidic residues" evidence="3">
    <location>
        <begin position="346"/>
        <end position="364"/>
    </location>
</feature>
<feature type="glycosylation site" description="N-linked (GlcNAc...) asparagine; by host" evidence="2">
    <location>
        <position position="56"/>
    </location>
</feature>
<feature type="glycosylation site" description="N-linked (GlcNAc...) asparagine; by host" evidence="2">
    <location>
        <position position="86"/>
    </location>
</feature>
<feature type="glycosylation site" description="N-linked (GlcNAc...) asparagine; by host" evidence="2">
    <location>
        <position position="142"/>
    </location>
</feature>
<feature type="glycosylation site" description="N-linked (GlcNAc...) asparagine; by host" evidence="2">
    <location>
        <position position="226"/>
    </location>
</feature>
<feature type="glycosylation site" description="N-linked (GlcNAc...) asparagine; by host" evidence="2">
    <location>
        <position position="443"/>
    </location>
</feature>
<organism>
    <name type="scientific">Suid herpesvirus 1 (strain Rice)</name>
    <name type="common">SuHV-1</name>
    <name type="synonym">Pseudorabies virus (strain Rice)</name>
    <dbReference type="NCBI Taxonomy" id="10350"/>
    <lineage>
        <taxon>Viruses</taxon>
        <taxon>Duplodnaviria</taxon>
        <taxon>Heunggongvirae</taxon>
        <taxon>Peploviricota</taxon>
        <taxon>Herviviricetes</taxon>
        <taxon>Herpesvirales</taxon>
        <taxon>Orthoherpesviridae</taxon>
        <taxon>Alphaherpesvirinae</taxon>
        <taxon>Varicellovirus</taxon>
        <taxon>Varicellovirus suidalpha1</taxon>
        <taxon>Suid herpesvirus 1</taxon>
    </lineage>
</organism>
<accession>P07562</accession>
<gene>
    <name type="primary">gG</name>
    <name type="ordered locus">70</name>
</gene>
<proteinExistence type="inferred from homology"/>
<protein>
    <recommendedName>
        <fullName>Envelope glycoprotein G</fullName>
        <shortName>gG</shortName>
    </recommendedName>
</protein>
<comment type="function">
    <text evidence="1">Chemokine-binding protein that inhibits neutrophils' chemotaxis.</text>
</comment>
<comment type="subcellular location">
    <subcellularLocation>
        <location evidence="4">Virion membrane</location>
        <topology evidence="4">Single-pass type I membrane protein</topology>
    </subcellularLocation>
</comment>
<comment type="similarity">
    <text evidence="4">Belongs to the alphaherpesvirinae glycoprotein G family.</text>
</comment>
<name>GG_SUHVR</name>